<sequence length="256" mass="29194">MSGNREQVFPTRMTLGLMKTKLKGANQGYSLLKRKSEALTKRFRDITKRIDDAKQKMGRVMQTAAFSLAEVSYATGENIGYQVQESVSTARFKVRARQENVSGVYLSQFESYIDPEINDFRLTGLGRGGQQVQRAKEIYSRAVETLVELASLQTAFIILDEVIKVTNRRVNAIEHVIIPRTENTIAYINSELDELDREEFYRLKKVQEKKQNETAKLDAEMKLKRDRAEQDASEVAADEEPQGETLVADQEDDVIF</sequence>
<feature type="chain" id="PRO_0000144244" description="V-type proton ATPase subunit D">
    <location>
        <begin position="1"/>
        <end position="256"/>
    </location>
</feature>
<feature type="region of interest" description="Disordered" evidence="1">
    <location>
        <begin position="211"/>
        <end position="256"/>
    </location>
</feature>
<feature type="compositionally biased region" description="Basic and acidic residues" evidence="1">
    <location>
        <begin position="211"/>
        <end position="230"/>
    </location>
</feature>
<feature type="helix" evidence="17">
    <location>
        <begin position="29"/>
        <end position="75"/>
    </location>
</feature>
<feature type="helix" evidence="17">
    <location>
        <begin position="79"/>
        <end position="85"/>
    </location>
</feature>
<feature type="strand" evidence="17">
    <location>
        <begin position="91"/>
        <end position="101"/>
    </location>
</feature>
<feature type="strand" evidence="17">
    <location>
        <begin position="104"/>
        <end position="113"/>
    </location>
</feature>
<feature type="strand" evidence="17">
    <location>
        <begin position="115"/>
        <end position="117"/>
    </location>
</feature>
<feature type="turn" evidence="18">
    <location>
        <begin position="121"/>
        <end position="125"/>
    </location>
</feature>
<feature type="helix" evidence="17">
    <location>
        <begin position="128"/>
        <end position="175"/>
    </location>
</feature>
<feature type="helix" evidence="17">
    <location>
        <begin position="177"/>
        <end position="202"/>
    </location>
</feature>
<evidence type="ECO:0000256" key="1">
    <source>
        <dbReference type="SAM" id="MobiDB-lite"/>
    </source>
</evidence>
<evidence type="ECO:0000269" key="2">
    <source>
    </source>
</evidence>
<evidence type="ECO:0000269" key="3">
    <source>
    </source>
</evidence>
<evidence type="ECO:0000269" key="4">
    <source>
    </source>
</evidence>
<evidence type="ECO:0000269" key="5">
    <source>
    </source>
</evidence>
<evidence type="ECO:0000269" key="6">
    <source>
    </source>
</evidence>
<evidence type="ECO:0000269" key="7">
    <source>
    </source>
</evidence>
<evidence type="ECO:0000303" key="8">
    <source>
    </source>
</evidence>
<evidence type="ECO:0000303" key="9">
    <source>
    </source>
</evidence>
<evidence type="ECO:0000305" key="10"/>
<evidence type="ECO:0000312" key="11">
    <source>
        <dbReference type="SGD" id="S000000777"/>
    </source>
</evidence>
<evidence type="ECO:0007744" key="12">
    <source>
        <dbReference type="PDB" id="3J9T"/>
    </source>
</evidence>
<evidence type="ECO:0007744" key="13">
    <source>
        <dbReference type="PDB" id="3J9U"/>
    </source>
</evidence>
<evidence type="ECO:0007744" key="14">
    <source>
        <dbReference type="PDB" id="3J9V"/>
    </source>
</evidence>
<evidence type="ECO:0007744" key="15">
    <source>
        <dbReference type="PDB" id="5BW9"/>
    </source>
</evidence>
<evidence type="ECO:0007744" key="16">
    <source>
        <dbReference type="PDB" id="5D80"/>
    </source>
</evidence>
<evidence type="ECO:0007829" key="17">
    <source>
        <dbReference type="PDB" id="4RND"/>
    </source>
</evidence>
<evidence type="ECO:0007829" key="18">
    <source>
        <dbReference type="PDB" id="7TMM"/>
    </source>
</evidence>
<dbReference type="EMBL" id="U18779">
    <property type="protein sequence ID" value="AAB64991.1"/>
    <property type="molecule type" value="Genomic_DNA"/>
</dbReference>
<dbReference type="EMBL" id="BK006939">
    <property type="protein sequence ID" value="DAA07603.1"/>
    <property type="molecule type" value="Genomic_DNA"/>
</dbReference>
<dbReference type="PIR" id="S30826">
    <property type="entry name" value="S30826"/>
</dbReference>
<dbReference type="RefSeq" id="NP_010863.1">
    <property type="nucleotide sequence ID" value="NM_001178866.1"/>
</dbReference>
<dbReference type="PDB" id="3J9T">
    <property type="method" value="EM"/>
    <property type="resolution" value="6.90 A"/>
    <property type="chains" value="M=1-256"/>
</dbReference>
<dbReference type="PDB" id="3J9U">
    <property type="method" value="EM"/>
    <property type="resolution" value="7.60 A"/>
    <property type="chains" value="M=1-256"/>
</dbReference>
<dbReference type="PDB" id="3J9V">
    <property type="method" value="EM"/>
    <property type="resolution" value="8.30 A"/>
    <property type="chains" value="M=1-256"/>
</dbReference>
<dbReference type="PDB" id="4RND">
    <property type="method" value="X-ray"/>
    <property type="resolution" value="3.18 A"/>
    <property type="chains" value="A/C=1-256"/>
</dbReference>
<dbReference type="PDB" id="5BW9">
    <property type="method" value="X-ray"/>
    <property type="resolution" value="7.00 A"/>
    <property type="chains" value="G/g=1-256"/>
</dbReference>
<dbReference type="PDB" id="5D80">
    <property type="method" value="X-ray"/>
    <property type="resolution" value="6.20 A"/>
    <property type="chains" value="G/g=1-256"/>
</dbReference>
<dbReference type="PDB" id="5VOX">
    <property type="method" value="EM"/>
    <property type="resolution" value="6.80 A"/>
    <property type="chains" value="M=1-256"/>
</dbReference>
<dbReference type="PDB" id="5VOY">
    <property type="method" value="EM"/>
    <property type="resolution" value="7.90 A"/>
    <property type="chains" value="M=1-256"/>
</dbReference>
<dbReference type="PDB" id="5VOZ">
    <property type="method" value="EM"/>
    <property type="resolution" value="7.60 A"/>
    <property type="chains" value="M=1-256"/>
</dbReference>
<dbReference type="PDB" id="6O7V">
    <property type="method" value="EM"/>
    <property type="resolution" value="6.60 A"/>
    <property type="chains" value="M=1-256"/>
</dbReference>
<dbReference type="PDB" id="6O7W">
    <property type="method" value="EM"/>
    <property type="resolution" value="7.00 A"/>
    <property type="chains" value="M=1-256"/>
</dbReference>
<dbReference type="PDB" id="6O7X">
    <property type="method" value="EM"/>
    <property type="resolution" value="8.70 A"/>
    <property type="chains" value="M=1-256"/>
</dbReference>
<dbReference type="PDB" id="7FDA">
    <property type="method" value="EM"/>
    <property type="resolution" value="4.20 A"/>
    <property type="chains" value="M=1-256"/>
</dbReference>
<dbReference type="PDB" id="7FDB">
    <property type="method" value="EM"/>
    <property type="resolution" value="4.80 A"/>
    <property type="chains" value="M=1-256"/>
</dbReference>
<dbReference type="PDB" id="7FDC">
    <property type="method" value="EM"/>
    <property type="resolution" value="6.60 A"/>
    <property type="chains" value="M=1-256"/>
</dbReference>
<dbReference type="PDB" id="7FDE">
    <property type="method" value="EM"/>
    <property type="resolution" value="3.80 A"/>
    <property type="chains" value="M=1-256"/>
</dbReference>
<dbReference type="PDB" id="7TMM">
    <property type="method" value="EM"/>
    <property type="resolution" value="3.50 A"/>
    <property type="chains" value="M=1-256"/>
</dbReference>
<dbReference type="PDB" id="7TMO">
    <property type="method" value="EM"/>
    <property type="resolution" value="3.30 A"/>
    <property type="chains" value="M=1-256"/>
</dbReference>
<dbReference type="PDB" id="7TMP">
    <property type="method" value="EM"/>
    <property type="resolution" value="3.30 A"/>
    <property type="chains" value="M=1-256"/>
</dbReference>
<dbReference type="PDB" id="7TMQ">
    <property type="method" value="EM"/>
    <property type="resolution" value="3.30 A"/>
    <property type="chains" value="M=1-256"/>
</dbReference>
<dbReference type="PDB" id="7TMR">
    <property type="method" value="EM"/>
    <property type="resolution" value="3.50 A"/>
    <property type="chains" value="M=1-256"/>
</dbReference>
<dbReference type="PDB" id="9COP">
    <property type="method" value="EM"/>
    <property type="resolution" value="2.70 A"/>
    <property type="chains" value="M=1-256"/>
</dbReference>
<dbReference type="PDBsum" id="3J9T"/>
<dbReference type="PDBsum" id="3J9U"/>
<dbReference type="PDBsum" id="3J9V"/>
<dbReference type="PDBsum" id="4RND"/>
<dbReference type="PDBsum" id="5BW9"/>
<dbReference type="PDBsum" id="5D80"/>
<dbReference type="PDBsum" id="5VOX"/>
<dbReference type="PDBsum" id="5VOY"/>
<dbReference type="PDBsum" id="5VOZ"/>
<dbReference type="PDBsum" id="6O7V"/>
<dbReference type="PDBsum" id="6O7W"/>
<dbReference type="PDBsum" id="6O7X"/>
<dbReference type="PDBsum" id="7FDA"/>
<dbReference type="PDBsum" id="7FDB"/>
<dbReference type="PDBsum" id="7FDC"/>
<dbReference type="PDBsum" id="7FDE"/>
<dbReference type="PDBsum" id="7TMM"/>
<dbReference type="PDBsum" id="7TMO"/>
<dbReference type="PDBsum" id="7TMP"/>
<dbReference type="PDBsum" id="7TMQ"/>
<dbReference type="PDBsum" id="7TMR"/>
<dbReference type="PDBsum" id="9COP"/>
<dbReference type="EMDB" id="EMD-0646"/>
<dbReference type="EMDB" id="EMD-0647"/>
<dbReference type="EMDB" id="EMD-0648"/>
<dbReference type="EMDB" id="EMD-31538"/>
<dbReference type="EMDB" id="EMD-31539"/>
<dbReference type="EMDB" id="EMD-31540"/>
<dbReference type="EMDB" id="EMD-31541"/>
<dbReference type="EMDB" id="EMD-45788"/>
<dbReference type="EMDB" id="EMD-8724"/>
<dbReference type="EMDB" id="EMD-8725"/>
<dbReference type="EMDB" id="EMD-8726"/>
<dbReference type="SMR" id="P32610"/>
<dbReference type="BioGRID" id="36678">
    <property type="interactions" value="462"/>
</dbReference>
<dbReference type="ComplexPortal" id="CPX-1192">
    <property type="entry name" value="Vacuolar proton translocating ATPase complex, Golgi variant"/>
</dbReference>
<dbReference type="ComplexPortal" id="CPX-1193">
    <property type="entry name" value="Vacuolar proton translocating ATPase complex, vacuole variant"/>
</dbReference>
<dbReference type="DIP" id="DIP-2959N"/>
<dbReference type="FunCoup" id="P32610">
    <property type="interactions" value="1117"/>
</dbReference>
<dbReference type="IntAct" id="P32610">
    <property type="interactions" value="75"/>
</dbReference>
<dbReference type="MINT" id="P32610"/>
<dbReference type="STRING" id="4932.YEL051W"/>
<dbReference type="TCDB" id="3.A.2.2.3">
    <property type="family name" value="the h+- or na+-translocating f-type, v-type and a-type atpase (f-atpase) superfamily"/>
</dbReference>
<dbReference type="iPTMnet" id="P32610"/>
<dbReference type="PaxDb" id="4932-YEL051W"/>
<dbReference type="PeptideAtlas" id="P32610"/>
<dbReference type="EnsemblFungi" id="YEL051W_mRNA">
    <property type="protein sequence ID" value="YEL051W"/>
    <property type="gene ID" value="YEL051W"/>
</dbReference>
<dbReference type="GeneID" id="856659"/>
<dbReference type="KEGG" id="sce:YEL051W"/>
<dbReference type="AGR" id="SGD:S000000777"/>
<dbReference type="SGD" id="S000000777">
    <property type="gene designation" value="VMA8"/>
</dbReference>
<dbReference type="VEuPathDB" id="FungiDB:YEL051W"/>
<dbReference type="eggNOG" id="KOG1647">
    <property type="taxonomic scope" value="Eukaryota"/>
</dbReference>
<dbReference type="GeneTree" id="ENSGT00390000010770"/>
<dbReference type="HOGENOM" id="CLU_069688_0_1_1"/>
<dbReference type="InParanoid" id="P32610"/>
<dbReference type="OMA" id="REEFFRM"/>
<dbReference type="OrthoDB" id="7676488at2759"/>
<dbReference type="BioCyc" id="YEAST:G3O-30169-MONOMER"/>
<dbReference type="Reactome" id="R-SCE-1222556">
    <property type="pathway name" value="ROS and RNS production in phagocytes"/>
</dbReference>
<dbReference type="Reactome" id="R-SCE-6798695">
    <property type="pathway name" value="Neutrophil degranulation"/>
</dbReference>
<dbReference type="Reactome" id="R-SCE-77387">
    <property type="pathway name" value="Insulin receptor recycling"/>
</dbReference>
<dbReference type="Reactome" id="R-SCE-917977">
    <property type="pathway name" value="Transferrin endocytosis and recycling"/>
</dbReference>
<dbReference type="Reactome" id="R-SCE-9639288">
    <property type="pathway name" value="Amino acids regulate mTORC1"/>
</dbReference>
<dbReference type="BioGRID-ORCS" id="856659">
    <property type="hits" value="5 hits in 10 CRISPR screens"/>
</dbReference>
<dbReference type="EvolutionaryTrace" id="P32610"/>
<dbReference type="PRO" id="PR:P32610"/>
<dbReference type="Proteomes" id="UP000002311">
    <property type="component" value="Chromosome V"/>
</dbReference>
<dbReference type="RNAct" id="P32610">
    <property type="molecule type" value="protein"/>
</dbReference>
<dbReference type="GO" id="GO:0000329">
    <property type="term" value="C:fungal-type vacuole membrane"/>
    <property type="evidence" value="ECO:0000314"/>
    <property type="project" value="SGD"/>
</dbReference>
<dbReference type="GO" id="GO:0000139">
    <property type="term" value="C:Golgi membrane"/>
    <property type="evidence" value="ECO:0000303"/>
    <property type="project" value="ComplexPortal"/>
</dbReference>
<dbReference type="GO" id="GO:0045121">
    <property type="term" value="C:membrane raft"/>
    <property type="evidence" value="ECO:0000314"/>
    <property type="project" value="SGD"/>
</dbReference>
<dbReference type="GO" id="GO:0033176">
    <property type="term" value="C:proton-transporting V-type ATPase complex"/>
    <property type="evidence" value="ECO:0000353"/>
    <property type="project" value="ComplexPortal"/>
</dbReference>
<dbReference type="GO" id="GO:0016471">
    <property type="term" value="C:vacuolar proton-transporting V-type ATPase complex"/>
    <property type="evidence" value="ECO:0000314"/>
    <property type="project" value="SGD"/>
</dbReference>
<dbReference type="GO" id="GO:0000221">
    <property type="term" value="C:vacuolar proton-transporting V-type ATPase, V1 domain"/>
    <property type="evidence" value="ECO:0000314"/>
    <property type="project" value="UniProtKB"/>
</dbReference>
<dbReference type="GO" id="GO:0046961">
    <property type="term" value="F:proton-transporting ATPase activity, rotational mechanism"/>
    <property type="evidence" value="ECO:0000305"/>
    <property type="project" value="UniProtKB"/>
</dbReference>
<dbReference type="GO" id="GO:0048388">
    <property type="term" value="P:endosomal lumen acidification"/>
    <property type="evidence" value="ECO:0000303"/>
    <property type="project" value="ComplexPortal"/>
</dbReference>
<dbReference type="GO" id="GO:0061795">
    <property type="term" value="P:Golgi lumen acidification"/>
    <property type="evidence" value="ECO:0000303"/>
    <property type="project" value="ComplexPortal"/>
</dbReference>
<dbReference type="GO" id="GO:1902600">
    <property type="term" value="P:proton transmembrane transport"/>
    <property type="evidence" value="ECO:0000314"/>
    <property type="project" value="ComplexPortal"/>
</dbReference>
<dbReference type="GO" id="GO:0007035">
    <property type="term" value="P:vacuolar acidification"/>
    <property type="evidence" value="ECO:0000315"/>
    <property type="project" value="SGD"/>
</dbReference>
<dbReference type="FunFam" id="1.10.287.3240:FF:000002">
    <property type="entry name" value="Vacuolar atp synthase subunit d"/>
    <property type="match status" value="1"/>
</dbReference>
<dbReference type="Gene3D" id="1.10.287.3240">
    <property type="match status" value="1"/>
</dbReference>
<dbReference type="InterPro" id="IPR002699">
    <property type="entry name" value="V_ATPase_D"/>
</dbReference>
<dbReference type="NCBIfam" id="TIGR00309">
    <property type="entry name" value="V_ATPase_subD"/>
    <property type="match status" value="1"/>
</dbReference>
<dbReference type="PANTHER" id="PTHR11671">
    <property type="entry name" value="V-TYPE ATP SYNTHASE SUBUNIT D"/>
    <property type="match status" value="1"/>
</dbReference>
<dbReference type="Pfam" id="PF01813">
    <property type="entry name" value="ATP-synt_D"/>
    <property type="match status" value="1"/>
</dbReference>
<reference key="1">
    <citation type="journal article" date="1995" name="J. Biol. Chem.">
        <title>VMA8 encodes a 32-kDa V1 subunit of the Saccharomyces cerevisiae vacuolar H(+)-ATPase required for function and assembly of the enzyme complex.</title>
        <authorList>
            <person name="Graham L.A."/>
            <person name="Hill K.J."/>
            <person name="Stevens T.H."/>
        </authorList>
    </citation>
    <scope>NUCLEOTIDE SEQUENCE [GENOMIC DNA]</scope>
    <scope>PROTEIN SEQUENCE OF 6-12; 170-179 AND 182-187</scope>
    <scope>FUNCTION</scope>
    <scope>SUBCELLULAR LOCATION</scope>
</reference>
<reference key="2">
    <citation type="journal article" date="1997" name="Nature">
        <title>The nucleotide sequence of Saccharomyces cerevisiae chromosome V.</title>
        <authorList>
            <person name="Dietrich F.S."/>
            <person name="Mulligan J.T."/>
            <person name="Hennessy K.M."/>
            <person name="Yelton M.A."/>
            <person name="Allen E."/>
            <person name="Araujo R."/>
            <person name="Aviles E."/>
            <person name="Berno A."/>
            <person name="Brennan T."/>
            <person name="Carpenter J."/>
            <person name="Chen E."/>
            <person name="Cherry J.M."/>
            <person name="Chung E."/>
            <person name="Duncan M."/>
            <person name="Guzman E."/>
            <person name="Hartzell G."/>
            <person name="Hunicke-Smith S."/>
            <person name="Hyman R.W."/>
            <person name="Kayser A."/>
            <person name="Komp C."/>
            <person name="Lashkari D."/>
            <person name="Lew H."/>
            <person name="Lin D."/>
            <person name="Mosedale D."/>
            <person name="Nakahara K."/>
            <person name="Namath A."/>
            <person name="Norgren R."/>
            <person name="Oefner P."/>
            <person name="Oh C."/>
            <person name="Petel F.X."/>
            <person name="Roberts D."/>
            <person name="Sehl P."/>
            <person name="Schramm S."/>
            <person name="Shogren T."/>
            <person name="Smith V."/>
            <person name="Taylor P."/>
            <person name="Wei Y."/>
            <person name="Botstein D."/>
            <person name="Davis R.W."/>
        </authorList>
    </citation>
    <scope>NUCLEOTIDE SEQUENCE [LARGE SCALE GENOMIC DNA]</scope>
    <source>
        <strain>ATCC 204508 / S288c</strain>
    </source>
</reference>
<reference key="3">
    <citation type="journal article" date="2014" name="G3 (Bethesda)">
        <title>The reference genome sequence of Saccharomyces cerevisiae: Then and now.</title>
        <authorList>
            <person name="Engel S.R."/>
            <person name="Dietrich F.S."/>
            <person name="Fisk D.G."/>
            <person name="Binkley G."/>
            <person name="Balakrishnan R."/>
            <person name="Costanzo M.C."/>
            <person name="Dwight S.S."/>
            <person name="Hitz B.C."/>
            <person name="Karra K."/>
            <person name="Nash R.S."/>
            <person name="Weng S."/>
            <person name="Wong E.D."/>
            <person name="Lloyd P."/>
            <person name="Skrzypek M.S."/>
            <person name="Miyasato S.R."/>
            <person name="Simison M."/>
            <person name="Cherry J.M."/>
        </authorList>
    </citation>
    <scope>GENOME REANNOTATION</scope>
    <source>
        <strain>ATCC 204508 / S288c</strain>
    </source>
</reference>
<reference key="4">
    <citation type="journal article" date="1995" name="Proc. Natl. Acad. Sci. U.S.A.">
        <title>A bovine cDNA and a yeast gene (VMA8) encoding the subunit D of the vacuolar H(+)-ATPase.</title>
        <authorList>
            <person name="Nelson H."/>
            <person name="Mandiyan S."/>
            <person name="Nelson N."/>
        </authorList>
    </citation>
    <scope>FUNCTION</scope>
</reference>
<reference key="5">
    <citation type="journal article" date="2001" name="Nat. Cell Biol.">
        <title>Skp1 forms multiple protein complexes, including RAVE, a regulator of V-ATPase assembly.</title>
        <authorList>
            <person name="Seol J.H."/>
            <person name="Shevchenko A."/>
            <person name="Shevchenko A."/>
            <person name="Deshaies R.J."/>
        </authorList>
    </citation>
    <scope>INTERACTION WITH RAV1 AND RAV2</scope>
</reference>
<reference key="6">
    <citation type="journal article" date="2003" name="Nature">
        <title>Global analysis of protein expression in yeast.</title>
        <authorList>
            <person name="Ghaemmaghami S."/>
            <person name="Huh W.-K."/>
            <person name="Bower K."/>
            <person name="Howson R.W."/>
            <person name="Belle A."/>
            <person name="Dephoure N."/>
            <person name="O'Shea E.K."/>
            <person name="Weissman J.S."/>
        </authorList>
    </citation>
    <scope>LEVEL OF PROTEIN EXPRESSION [LARGE SCALE ANALYSIS]</scope>
</reference>
<reference evidence="12 13 14" key="7">
    <citation type="journal article" date="2015" name="Nature">
        <title>Electron cryomicroscopy observation of rotational states in a eukaryotic V-ATPase.</title>
        <authorList>
            <person name="Zhao J."/>
            <person name="Benlekbir S."/>
            <person name="Rubinstein J.L."/>
        </authorList>
    </citation>
    <scope>STRUCTURE BY ELECTRON MICROSCOPY (6.90 ANGSTROMS)</scope>
    <scope>IDENTIFICATION IN THE V-ATPASE COMPLEX</scope>
</reference>
<reference evidence="15 16" key="8">
    <citation type="journal article" date="2016" name="EMBO J.">
        <title>Crystal structure of yeast V1-ATPase in the autoinhibited state.</title>
        <authorList>
            <person name="Oot R.A."/>
            <person name="Kane P.M."/>
            <person name="Berry E.A."/>
            <person name="Wilkens S."/>
        </authorList>
    </citation>
    <scope>X-RAY CRYSTALLOGRAPHY (6.20 ANGSTROMS)</scope>
    <scope>IDENTIFICATION IN THE V-ATPASE COMPLEX</scope>
</reference>
<name>VATD_YEAST</name>
<keyword id="KW-0002">3D-structure</keyword>
<keyword id="KW-0903">Direct protein sequencing</keyword>
<keyword id="KW-0375">Hydrogen ion transport</keyword>
<keyword id="KW-0406">Ion transport</keyword>
<keyword id="KW-0472">Membrane</keyword>
<keyword id="KW-1185">Reference proteome</keyword>
<keyword id="KW-0813">Transport</keyword>
<keyword id="KW-0926">Vacuole</keyword>
<gene>
    <name evidence="8" type="primary">VMA8</name>
    <name evidence="11" type="ordered locus">YEL051W</name>
    <name type="ORF">SYGP-ORF11</name>
</gene>
<proteinExistence type="evidence at protein level"/>
<accession>P32610</accession>
<accession>D3DLJ9</accession>
<organism>
    <name type="scientific">Saccharomyces cerevisiae (strain ATCC 204508 / S288c)</name>
    <name type="common">Baker's yeast</name>
    <dbReference type="NCBI Taxonomy" id="559292"/>
    <lineage>
        <taxon>Eukaryota</taxon>
        <taxon>Fungi</taxon>
        <taxon>Dikarya</taxon>
        <taxon>Ascomycota</taxon>
        <taxon>Saccharomycotina</taxon>
        <taxon>Saccharomycetes</taxon>
        <taxon>Saccharomycetales</taxon>
        <taxon>Saccharomycetaceae</taxon>
        <taxon>Saccharomyces</taxon>
    </lineage>
</organism>
<protein>
    <recommendedName>
        <fullName evidence="9">V-type proton ATPase subunit D</fullName>
        <shortName>V-ATPase subunit D</shortName>
    </recommendedName>
    <alternativeName>
        <fullName>Vacuolar proton pump subunit D</fullName>
    </alternativeName>
</protein>
<comment type="function">
    <text evidence="6 7">Subunit of the V1 complex of vacuolar(H+)-ATPase (V-ATPase), a multisubunit enzyme composed of a peripheral complex (V1) that hydrolyzes ATP and a membrane integral complex (V0) that translocates protons (PubMed:7797485, PubMed:7831318). V-ATPase is responsible for acidifying and maintaining the pH of intracellular compartments (PubMed:7797485, PubMed:7831318).</text>
</comment>
<comment type="subunit">
    <text evidence="2 4 5">V-ATPase is a heteromultimeric enzyme composed of a peripheral catalytic V1 complex (components A to H) attached to an integral membrane V0 proton pore complex (components: a, c, c', c'', d, e, f and VOA1) (PubMed:25971514, PubMed:27295975). Interacts with RAV1 and RAV2 components of the RAVE complex, which are essential for the stability and assembly of V-ATPase (PubMed:11283612).</text>
</comment>
<comment type="interaction">
    <interactant intactId="EBI-20264">
        <id>P32610</id>
    </interactant>
    <interactant intactId="EBI-25471">
        <id>P47104</id>
        <label>RAV1</label>
    </interactant>
    <organismsDiffer>false</organismsDiffer>
    <experiments>2</experiments>
</comment>
<comment type="interaction">
    <interactant intactId="EBI-20264">
        <id>P32610</id>
    </interactant>
    <interactant intactId="EBI-20201">
        <id>P32366</id>
        <label>VMA6</label>
    </interactant>
    <organismsDiffer>false</organismsDiffer>
    <experiments>5</experiments>
</comment>
<comment type="interaction">
    <interactant intactId="EBI-20264">
        <id>P32610</id>
    </interactant>
    <interactant intactId="EBI-20272">
        <id>P39111</id>
        <label>VMA7</label>
    </interactant>
    <organismsDiffer>false</organismsDiffer>
    <experiments>4</experiments>
</comment>
<comment type="interaction">
    <interactant intactId="EBI-20264">
        <id>P32610</id>
    </interactant>
    <interactant intactId="EBI-20455">
        <id>P32563</id>
        <label>VPH1</label>
    </interactant>
    <organismsDiffer>false</organismsDiffer>
    <experiments>3</experiments>
</comment>
<comment type="subcellular location">
    <subcellularLocation>
        <location evidence="6">Vacuole membrane</location>
        <topology evidence="10">Peripheral membrane protein</topology>
        <orientation evidence="10">Cytoplasmic side</orientation>
    </subcellularLocation>
</comment>
<comment type="miscellaneous">
    <text evidence="3">Present with 8500 molecules/cell in log phase SD medium.</text>
</comment>
<comment type="similarity">
    <text evidence="10">Belongs to the V-ATPase D subunit family.</text>
</comment>